<evidence type="ECO:0000255" key="1">
    <source>
        <dbReference type="HAMAP-Rule" id="MF_00323"/>
    </source>
</evidence>
<reference key="1">
    <citation type="journal article" date="2004" name="Proc. Natl. Acad. Sci. U.S.A.">
        <title>Genome sequence of the enterobacterial phytopathogen Erwinia carotovora subsp. atroseptica and characterization of virulence factors.</title>
        <authorList>
            <person name="Bell K.S."/>
            <person name="Sebaihia M."/>
            <person name="Pritchard L."/>
            <person name="Holden M.T.G."/>
            <person name="Hyman L.J."/>
            <person name="Holeva M.C."/>
            <person name="Thomson N.R."/>
            <person name="Bentley S.D."/>
            <person name="Churcher L.J.C."/>
            <person name="Mungall K."/>
            <person name="Atkin R."/>
            <person name="Bason N."/>
            <person name="Brooks K."/>
            <person name="Chillingworth T."/>
            <person name="Clark K."/>
            <person name="Doggett J."/>
            <person name="Fraser A."/>
            <person name="Hance Z."/>
            <person name="Hauser H."/>
            <person name="Jagels K."/>
            <person name="Moule S."/>
            <person name="Norbertczak H."/>
            <person name="Ormond D."/>
            <person name="Price C."/>
            <person name="Quail M.A."/>
            <person name="Sanders M."/>
            <person name="Walker D."/>
            <person name="Whitehead S."/>
            <person name="Salmond G.P.C."/>
            <person name="Birch P.R.J."/>
            <person name="Parkhill J."/>
            <person name="Toth I.K."/>
        </authorList>
    </citation>
    <scope>NUCLEOTIDE SEQUENCE [LARGE SCALE GENOMIC DNA]</scope>
    <source>
        <strain>SCRI 1043 / ATCC BAA-672</strain>
    </source>
</reference>
<proteinExistence type="inferred from homology"/>
<comment type="function">
    <text evidence="1">Catalyzes the ferrous insertion into protoporphyrin IX.</text>
</comment>
<comment type="catalytic activity">
    <reaction evidence="1">
        <text>heme b + 2 H(+) = protoporphyrin IX + Fe(2+)</text>
        <dbReference type="Rhea" id="RHEA:22584"/>
        <dbReference type="ChEBI" id="CHEBI:15378"/>
        <dbReference type="ChEBI" id="CHEBI:29033"/>
        <dbReference type="ChEBI" id="CHEBI:57306"/>
        <dbReference type="ChEBI" id="CHEBI:60344"/>
        <dbReference type="EC" id="4.98.1.1"/>
    </reaction>
</comment>
<comment type="pathway">
    <text evidence="1">Porphyrin-containing compound metabolism; protoheme biosynthesis; protoheme from protoporphyrin-IX: step 1/1.</text>
</comment>
<comment type="subcellular location">
    <subcellularLocation>
        <location evidence="1">Cytoplasm</location>
    </subcellularLocation>
</comment>
<comment type="similarity">
    <text evidence="1">Belongs to the ferrochelatase family.</text>
</comment>
<dbReference type="EC" id="4.98.1.1" evidence="1"/>
<dbReference type="EMBL" id="BX950851">
    <property type="protein sequence ID" value="CAG74091.1"/>
    <property type="molecule type" value="Genomic_DNA"/>
</dbReference>
<dbReference type="RefSeq" id="WP_011092772.1">
    <property type="nucleotide sequence ID" value="NC_004547.2"/>
</dbReference>
<dbReference type="SMR" id="Q6D7Z4"/>
<dbReference type="STRING" id="218491.ECA1181"/>
<dbReference type="GeneID" id="57207993"/>
<dbReference type="KEGG" id="eca:ECA1181"/>
<dbReference type="PATRIC" id="fig|218491.5.peg.1198"/>
<dbReference type="eggNOG" id="COG0276">
    <property type="taxonomic scope" value="Bacteria"/>
</dbReference>
<dbReference type="HOGENOM" id="CLU_018884_0_0_6"/>
<dbReference type="OrthoDB" id="9809741at2"/>
<dbReference type="UniPathway" id="UPA00252">
    <property type="reaction ID" value="UER00325"/>
</dbReference>
<dbReference type="Proteomes" id="UP000007966">
    <property type="component" value="Chromosome"/>
</dbReference>
<dbReference type="GO" id="GO:0005737">
    <property type="term" value="C:cytoplasm"/>
    <property type="evidence" value="ECO:0007669"/>
    <property type="project" value="UniProtKB-SubCell"/>
</dbReference>
<dbReference type="GO" id="GO:0004325">
    <property type="term" value="F:ferrochelatase activity"/>
    <property type="evidence" value="ECO:0007669"/>
    <property type="project" value="UniProtKB-UniRule"/>
</dbReference>
<dbReference type="GO" id="GO:0046872">
    <property type="term" value="F:metal ion binding"/>
    <property type="evidence" value="ECO:0007669"/>
    <property type="project" value="UniProtKB-KW"/>
</dbReference>
<dbReference type="GO" id="GO:0006783">
    <property type="term" value="P:heme biosynthetic process"/>
    <property type="evidence" value="ECO:0007669"/>
    <property type="project" value="UniProtKB-UniRule"/>
</dbReference>
<dbReference type="CDD" id="cd00419">
    <property type="entry name" value="Ferrochelatase_C"/>
    <property type="match status" value="1"/>
</dbReference>
<dbReference type="CDD" id="cd03411">
    <property type="entry name" value="Ferrochelatase_N"/>
    <property type="match status" value="1"/>
</dbReference>
<dbReference type="FunFam" id="3.40.50.1400:FF:000004">
    <property type="entry name" value="Ferrochelatase"/>
    <property type="match status" value="1"/>
</dbReference>
<dbReference type="Gene3D" id="3.40.50.1400">
    <property type="match status" value="2"/>
</dbReference>
<dbReference type="HAMAP" id="MF_00323">
    <property type="entry name" value="Ferrochelatase"/>
    <property type="match status" value="1"/>
</dbReference>
<dbReference type="InterPro" id="IPR001015">
    <property type="entry name" value="Ferrochelatase"/>
</dbReference>
<dbReference type="InterPro" id="IPR019772">
    <property type="entry name" value="Ferrochelatase_AS"/>
</dbReference>
<dbReference type="InterPro" id="IPR033644">
    <property type="entry name" value="Ferrochelatase_C"/>
</dbReference>
<dbReference type="InterPro" id="IPR033659">
    <property type="entry name" value="Ferrochelatase_N"/>
</dbReference>
<dbReference type="NCBIfam" id="TIGR00109">
    <property type="entry name" value="hemH"/>
    <property type="match status" value="1"/>
</dbReference>
<dbReference type="PANTHER" id="PTHR11108">
    <property type="entry name" value="FERROCHELATASE"/>
    <property type="match status" value="1"/>
</dbReference>
<dbReference type="PANTHER" id="PTHR11108:SF1">
    <property type="entry name" value="FERROCHELATASE, MITOCHONDRIAL"/>
    <property type="match status" value="1"/>
</dbReference>
<dbReference type="Pfam" id="PF00762">
    <property type="entry name" value="Ferrochelatase"/>
    <property type="match status" value="1"/>
</dbReference>
<dbReference type="SUPFAM" id="SSF53800">
    <property type="entry name" value="Chelatase"/>
    <property type="match status" value="1"/>
</dbReference>
<dbReference type="PROSITE" id="PS00534">
    <property type="entry name" value="FERROCHELATASE"/>
    <property type="match status" value="1"/>
</dbReference>
<protein>
    <recommendedName>
        <fullName evidence="1">Ferrochelatase</fullName>
        <ecNumber evidence="1">4.98.1.1</ecNumber>
    </recommendedName>
    <alternativeName>
        <fullName evidence="1">Heme synthase</fullName>
    </alternativeName>
    <alternativeName>
        <fullName evidence="1">Protoheme ferro-lyase</fullName>
    </alternativeName>
</protein>
<organism>
    <name type="scientific">Pectobacterium atrosepticum (strain SCRI 1043 / ATCC BAA-672)</name>
    <name type="common">Erwinia carotovora subsp. atroseptica</name>
    <dbReference type="NCBI Taxonomy" id="218491"/>
    <lineage>
        <taxon>Bacteria</taxon>
        <taxon>Pseudomonadati</taxon>
        <taxon>Pseudomonadota</taxon>
        <taxon>Gammaproteobacteria</taxon>
        <taxon>Enterobacterales</taxon>
        <taxon>Pectobacteriaceae</taxon>
        <taxon>Pectobacterium</taxon>
    </lineage>
</organism>
<feature type="chain" id="PRO_0000175142" description="Ferrochelatase">
    <location>
        <begin position="1"/>
        <end position="320"/>
    </location>
</feature>
<feature type="binding site" evidence="1">
    <location>
        <position position="194"/>
    </location>
    <ligand>
        <name>Fe cation</name>
        <dbReference type="ChEBI" id="CHEBI:24875"/>
    </ligand>
</feature>
<feature type="binding site" evidence="1">
    <location>
        <position position="275"/>
    </location>
    <ligand>
        <name>Fe cation</name>
        <dbReference type="ChEBI" id="CHEBI:24875"/>
    </ligand>
</feature>
<gene>
    <name evidence="1" type="primary">hemH</name>
    <name type="ordered locus">ECA1181</name>
</gene>
<sequence>MKQEKYGVLMVNLGTPDAPTPQAVRRYLAEFLSDRRVVDTPRLLWWPLLRGIILPIRSPRVAKLYQSVWMEGGSPLLVISRRQHQALAARMPDTPVELGMSYGSPSLRSALDKLLAQGVTQLVVLPMYPQYSCSTTAAVWDGLAAQLRDNRQLPAIRFIRDYAEHPAYIAALKHRVEQSFAEHGEPDRLVISYHGIPVRYANEGDDYPQRCRATTEALIAALGLPEGKIMMTFQSRFGREPWLTPYTDETMQGLPAQGIKHIQIMCPGFAADCLETLEEIQEQNREIFLHAGGEAFHYIPALNDDPLHIDLLEQLVGKVE</sequence>
<keyword id="KW-0963">Cytoplasm</keyword>
<keyword id="KW-0350">Heme biosynthesis</keyword>
<keyword id="KW-0408">Iron</keyword>
<keyword id="KW-0456">Lyase</keyword>
<keyword id="KW-0479">Metal-binding</keyword>
<keyword id="KW-0627">Porphyrin biosynthesis</keyword>
<keyword id="KW-1185">Reference proteome</keyword>
<name>HEMH_PECAS</name>
<accession>Q6D7Z4</accession>